<comment type="function">
    <text evidence="1">Key component of the ribosome quality control system (RQC), a ribosome-associated complex that mediates the extraction of incompletely synthesized nascent chains from stalled ribosomes and their subsequent degradation. RqcH recruits Ala-charged tRNA, and with RqcP directs the elongation of stalled nascent chains on 50S ribosomal subunits, leading to non-templated C-terminal alanine extensions (Ala tail). The Ala tail promotes nascent chain degradation. RqcP is associated with the translocation-like movement of the peptidyl-tRNA from the A-site into the P-site.</text>
</comment>
<comment type="subunit">
    <text evidence="1">Associates with stalled 50S ribosomal subunits. Binds to RqcH, 23S rRNA and the P-site tRNA. Does not require RqcH for association with 50S subunits.</text>
</comment>
<comment type="similarity">
    <text evidence="1">Belongs to the RqcP family.</text>
</comment>
<dbReference type="EMBL" id="AE007317">
    <property type="protein sequence ID" value="AAK98811.1"/>
    <property type="molecule type" value="Genomic_DNA"/>
</dbReference>
<dbReference type="PIR" id="G97872">
    <property type="entry name" value="G97872"/>
</dbReference>
<dbReference type="RefSeq" id="NP_357601.1">
    <property type="nucleotide sequence ID" value="NC_003098.1"/>
</dbReference>
<dbReference type="RefSeq" id="WP_001234978.1">
    <property type="nucleotide sequence ID" value="NC_003098.1"/>
</dbReference>
<dbReference type="SMR" id="P64406"/>
<dbReference type="STRING" id="171101.spr0007"/>
<dbReference type="KEGG" id="spr:spr0007"/>
<dbReference type="PATRIC" id="fig|171101.6.peg.7"/>
<dbReference type="eggNOG" id="COG1188">
    <property type="taxonomic scope" value="Bacteria"/>
</dbReference>
<dbReference type="HOGENOM" id="CLU_101003_4_0_9"/>
<dbReference type="Proteomes" id="UP000000586">
    <property type="component" value="Chromosome"/>
</dbReference>
<dbReference type="GO" id="GO:0019843">
    <property type="term" value="F:rRNA binding"/>
    <property type="evidence" value="ECO:0007669"/>
    <property type="project" value="UniProtKB-KW"/>
</dbReference>
<dbReference type="GO" id="GO:0000049">
    <property type="term" value="F:tRNA binding"/>
    <property type="evidence" value="ECO:0007669"/>
    <property type="project" value="UniProtKB-KW"/>
</dbReference>
<dbReference type="GO" id="GO:0006412">
    <property type="term" value="P:translation"/>
    <property type="evidence" value="ECO:0007669"/>
    <property type="project" value="UniProtKB-KW"/>
</dbReference>
<dbReference type="CDD" id="cd00165">
    <property type="entry name" value="S4"/>
    <property type="match status" value="1"/>
</dbReference>
<dbReference type="Gene3D" id="3.10.290.10">
    <property type="entry name" value="RNA-binding S4 domain"/>
    <property type="match status" value="1"/>
</dbReference>
<dbReference type="HAMAP" id="MF_00871">
    <property type="entry name" value="RqcP"/>
    <property type="match status" value="1"/>
</dbReference>
<dbReference type="InterPro" id="IPR025490">
    <property type="entry name" value="RqcP"/>
</dbReference>
<dbReference type="InterPro" id="IPR002942">
    <property type="entry name" value="S4_RNA-bd"/>
</dbReference>
<dbReference type="InterPro" id="IPR036986">
    <property type="entry name" value="S4_RNA-bd_sf"/>
</dbReference>
<dbReference type="Pfam" id="PF01479">
    <property type="entry name" value="S4"/>
    <property type="match status" value="1"/>
</dbReference>
<dbReference type="PIRSF" id="PIRSF038881">
    <property type="entry name" value="RNAbp_HP1423"/>
    <property type="match status" value="1"/>
</dbReference>
<dbReference type="SMART" id="SM00363">
    <property type="entry name" value="S4"/>
    <property type="match status" value="1"/>
</dbReference>
<dbReference type="SUPFAM" id="SSF55174">
    <property type="entry name" value="Alpha-L RNA-binding motif"/>
    <property type="match status" value="1"/>
</dbReference>
<dbReference type="PROSITE" id="PS50889">
    <property type="entry name" value="S4"/>
    <property type="match status" value="1"/>
</dbReference>
<sequence>MRLDKYLKVSRIIKRRTVAKEVADKGRIKVNGILAKSSTDLKVNDQVEIRFGNKLLLVKVLEMKDSTKKEDAAGMYEIISETRVEENV</sequence>
<feature type="chain" id="PRO_0000201752" description="RQC P-site tRNA stabilizing factor">
    <location>
        <begin position="1"/>
        <end position="88"/>
    </location>
</feature>
<feature type="domain" description="S4 RNA-binding" evidence="1">
    <location>
        <begin position="1"/>
        <end position="60"/>
    </location>
</feature>
<name>RQCP_STRR6</name>
<accession>P64406</accession>
<accession>Q97TC9</accession>
<evidence type="ECO:0000255" key="1">
    <source>
        <dbReference type="HAMAP-Rule" id="MF_00871"/>
    </source>
</evidence>
<keyword id="KW-0648">Protein biosynthesis</keyword>
<keyword id="KW-1185">Reference proteome</keyword>
<keyword id="KW-0694">RNA-binding</keyword>
<keyword id="KW-0699">rRNA-binding</keyword>
<keyword id="KW-0820">tRNA-binding</keyword>
<protein>
    <recommendedName>
        <fullName evidence="1">RQC P-site tRNA stabilizing factor</fullName>
        <shortName evidence="1">RqcP</shortName>
    </recommendedName>
    <alternativeName>
        <fullName evidence="1">Ribosome-associated protein quality control protein P</fullName>
    </alternativeName>
</protein>
<reference key="1">
    <citation type="journal article" date="2001" name="J. Bacteriol.">
        <title>Genome of the bacterium Streptococcus pneumoniae strain R6.</title>
        <authorList>
            <person name="Hoskins J."/>
            <person name="Alborn W.E. Jr."/>
            <person name="Arnold J."/>
            <person name="Blaszczak L.C."/>
            <person name="Burgett S."/>
            <person name="DeHoff B.S."/>
            <person name="Estrem S.T."/>
            <person name="Fritz L."/>
            <person name="Fu D.-J."/>
            <person name="Fuller W."/>
            <person name="Geringer C."/>
            <person name="Gilmour R."/>
            <person name="Glass J.S."/>
            <person name="Khoja H."/>
            <person name="Kraft A.R."/>
            <person name="Lagace R.E."/>
            <person name="LeBlanc D.J."/>
            <person name="Lee L.N."/>
            <person name="Lefkowitz E.J."/>
            <person name="Lu J."/>
            <person name="Matsushima P."/>
            <person name="McAhren S.M."/>
            <person name="McHenney M."/>
            <person name="McLeaster K."/>
            <person name="Mundy C.W."/>
            <person name="Nicas T.I."/>
            <person name="Norris F.H."/>
            <person name="O'Gara M."/>
            <person name="Peery R.B."/>
            <person name="Robertson G.T."/>
            <person name="Rockey P."/>
            <person name="Sun P.-M."/>
            <person name="Winkler M.E."/>
            <person name="Yang Y."/>
            <person name="Young-Bellido M."/>
            <person name="Zhao G."/>
            <person name="Zook C.A."/>
            <person name="Baltz R.H."/>
            <person name="Jaskunas S.R."/>
            <person name="Rosteck P.R. Jr."/>
            <person name="Skatrud P.L."/>
            <person name="Glass J.I."/>
        </authorList>
    </citation>
    <scope>NUCLEOTIDE SEQUENCE [LARGE SCALE GENOMIC DNA]</scope>
    <source>
        <strain>ATCC BAA-255 / R6</strain>
    </source>
</reference>
<organism>
    <name type="scientific">Streptococcus pneumoniae (strain ATCC BAA-255 / R6)</name>
    <dbReference type="NCBI Taxonomy" id="171101"/>
    <lineage>
        <taxon>Bacteria</taxon>
        <taxon>Bacillati</taxon>
        <taxon>Bacillota</taxon>
        <taxon>Bacilli</taxon>
        <taxon>Lactobacillales</taxon>
        <taxon>Streptococcaceae</taxon>
        <taxon>Streptococcus</taxon>
    </lineage>
</organism>
<gene>
    <name evidence="1" type="primary">rqcP</name>
    <name type="ordered locus">spr0007</name>
</gene>
<proteinExistence type="inferred from homology"/>